<name>MNTH_XYLFT</name>
<sequence>MSCCIANAIRWDVSLLIHRSMSSSMSSVQPTSPVSDSPSLGEMHASVAVSRRGHWGFRLLAFLGPGYMVSVGYMDPGNWATGLAGGSRFGYMLLSVILLSNVMAIVLQALAARLGIASDMDLAQACRARYSRGTNLALWAVCELAIIACDLAEVIGTAIALNLLLGVPIILGAVITAVDVVLVLLLMHRGFRALEAFVIALLLVIFGCFVVQIVLAAPPLQEVLGGFVPRWQVVADPQALYLAIGIVGATVMPHNLYLHSSIVQTRAYPRTPVGRRSALRWAVADSTLALMLALFINASILILAAAVFHAQHHFDVEEIEQAYQLLAPVLGVGVAATLFATALLASGINSTVTATLAGQIVMEGFLRLRLRPWLRRVLTRGLAIVPVIVVVALYGEQGTGRLLLLSQVILSMQLPFAVIPLLRCVADRKVMGALVAPRWLMVVAWLIAGVIVVLNVKLLGDYAVHLMVGVSD</sequence>
<proteinExistence type="inferred from homology"/>
<accession>Q87EJ9</accession>
<evidence type="ECO:0000255" key="1">
    <source>
        <dbReference type="HAMAP-Rule" id="MF_00221"/>
    </source>
</evidence>
<reference key="1">
    <citation type="journal article" date="2003" name="J. Bacteriol.">
        <title>Comparative analyses of the complete genome sequences of Pierce's disease and citrus variegated chlorosis strains of Xylella fastidiosa.</title>
        <authorList>
            <person name="Van Sluys M.A."/>
            <person name="de Oliveira M.C."/>
            <person name="Monteiro-Vitorello C.B."/>
            <person name="Miyaki C.Y."/>
            <person name="Furlan L.R."/>
            <person name="Camargo L.E.A."/>
            <person name="da Silva A.C.R."/>
            <person name="Moon D.H."/>
            <person name="Takita M.A."/>
            <person name="Lemos E.G.M."/>
            <person name="Machado M.A."/>
            <person name="Ferro M.I.T."/>
            <person name="da Silva F.R."/>
            <person name="Goldman M.H.S."/>
            <person name="Goldman G.H."/>
            <person name="Lemos M.V.F."/>
            <person name="El-Dorry H."/>
            <person name="Tsai S.M."/>
            <person name="Carrer H."/>
            <person name="Carraro D.M."/>
            <person name="de Oliveira R.C."/>
            <person name="Nunes L.R."/>
            <person name="Siqueira W.J."/>
            <person name="Coutinho L.L."/>
            <person name="Kimura E.T."/>
            <person name="Ferro E.S."/>
            <person name="Harakava R."/>
            <person name="Kuramae E.E."/>
            <person name="Marino C.L."/>
            <person name="Giglioti E."/>
            <person name="Abreu I.L."/>
            <person name="Alves L.M.C."/>
            <person name="do Amaral A.M."/>
            <person name="Baia G.S."/>
            <person name="Blanco S.R."/>
            <person name="Brito M.S."/>
            <person name="Cannavan F.S."/>
            <person name="Celestino A.V."/>
            <person name="da Cunha A.F."/>
            <person name="Fenille R.C."/>
            <person name="Ferro J.A."/>
            <person name="Formighieri E.F."/>
            <person name="Kishi L.T."/>
            <person name="Leoni S.G."/>
            <person name="Oliveira A.R."/>
            <person name="Rosa V.E. Jr."/>
            <person name="Sassaki F.T."/>
            <person name="Sena J.A.D."/>
            <person name="de Souza A.A."/>
            <person name="Truffi D."/>
            <person name="Tsukumo F."/>
            <person name="Yanai G.M."/>
            <person name="Zaros L.G."/>
            <person name="Civerolo E.L."/>
            <person name="Simpson A.J.G."/>
            <person name="Almeida N.F. Jr."/>
            <person name="Setubal J.C."/>
            <person name="Kitajima J.P."/>
        </authorList>
    </citation>
    <scope>NUCLEOTIDE SEQUENCE [LARGE SCALE GENOMIC DNA]</scope>
    <source>
        <strain>Temecula1 / ATCC 700964</strain>
    </source>
</reference>
<protein>
    <recommendedName>
        <fullName evidence="1">Divalent metal cation transporter MntH</fullName>
    </recommendedName>
</protein>
<organism>
    <name type="scientific">Xylella fastidiosa (strain Temecula1 / ATCC 700964)</name>
    <dbReference type="NCBI Taxonomy" id="183190"/>
    <lineage>
        <taxon>Bacteria</taxon>
        <taxon>Pseudomonadati</taxon>
        <taxon>Pseudomonadota</taxon>
        <taxon>Gammaproteobacteria</taxon>
        <taxon>Lysobacterales</taxon>
        <taxon>Lysobacteraceae</taxon>
        <taxon>Xylella</taxon>
    </lineage>
</organism>
<comment type="function">
    <text evidence="1">H(+)-stimulated, divalent metal cation uptake system.</text>
</comment>
<comment type="subcellular location">
    <subcellularLocation>
        <location evidence="1">Cell inner membrane</location>
        <topology evidence="1">Multi-pass membrane protein</topology>
    </subcellularLocation>
</comment>
<comment type="similarity">
    <text evidence="1">Belongs to the NRAMP family.</text>
</comment>
<feature type="chain" id="PRO_0000212646" description="Divalent metal cation transporter MntH">
    <location>
        <begin position="1"/>
        <end position="472"/>
    </location>
</feature>
<feature type="transmembrane region" description="Helical" evidence="1">
    <location>
        <begin position="59"/>
        <end position="79"/>
    </location>
</feature>
<feature type="transmembrane region" description="Helical" evidence="1">
    <location>
        <begin position="92"/>
        <end position="112"/>
    </location>
</feature>
<feature type="transmembrane region" description="Helical" evidence="1">
    <location>
        <begin position="144"/>
        <end position="164"/>
    </location>
</feature>
<feature type="transmembrane region" description="Helical" evidence="1">
    <location>
        <begin position="167"/>
        <end position="187"/>
    </location>
</feature>
<feature type="transmembrane region" description="Helical" evidence="1">
    <location>
        <begin position="196"/>
        <end position="216"/>
    </location>
</feature>
<feature type="transmembrane region" description="Helical" evidence="1">
    <location>
        <begin position="233"/>
        <end position="253"/>
    </location>
</feature>
<feature type="transmembrane region" description="Helical" evidence="1">
    <location>
        <begin position="288"/>
        <end position="308"/>
    </location>
</feature>
<feature type="transmembrane region" description="Helical" evidence="1">
    <location>
        <begin position="325"/>
        <end position="345"/>
    </location>
</feature>
<feature type="transmembrane region" description="Helical" evidence="1">
    <location>
        <begin position="377"/>
        <end position="397"/>
    </location>
</feature>
<feature type="transmembrane region" description="Helical" evidence="1">
    <location>
        <begin position="402"/>
        <end position="422"/>
    </location>
</feature>
<feature type="transmembrane region" description="Helical" evidence="1">
    <location>
        <begin position="439"/>
        <end position="459"/>
    </location>
</feature>
<gene>
    <name evidence="1" type="primary">mntH</name>
    <name type="ordered locus">PD_0308</name>
</gene>
<keyword id="KW-0997">Cell inner membrane</keyword>
<keyword id="KW-1003">Cell membrane</keyword>
<keyword id="KW-0406">Ion transport</keyword>
<keyword id="KW-0472">Membrane</keyword>
<keyword id="KW-1185">Reference proteome</keyword>
<keyword id="KW-0769">Symport</keyword>
<keyword id="KW-0812">Transmembrane</keyword>
<keyword id="KW-1133">Transmembrane helix</keyword>
<keyword id="KW-0813">Transport</keyword>
<dbReference type="EMBL" id="AE009442">
    <property type="protein sequence ID" value="AAO28192.1"/>
    <property type="molecule type" value="Genomic_DNA"/>
</dbReference>
<dbReference type="SMR" id="Q87EJ9"/>
<dbReference type="KEGG" id="xft:PD_0308"/>
<dbReference type="HOGENOM" id="CLU_020088_2_0_6"/>
<dbReference type="Proteomes" id="UP000002516">
    <property type="component" value="Chromosome"/>
</dbReference>
<dbReference type="GO" id="GO:0005886">
    <property type="term" value="C:plasma membrane"/>
    <property type="evidence" value="ECO:0007669"/>
    <property type="project" value="UniProtKB-SubCell"/>
</dbReference>
<dbReference type="GO" id="GO:0015086">
    <property type="term" value="F:cadmium ion transmembrane transporter activity"/>
    <property type="evidence" value="ECO:0007669"/>
    <property type="project" value="TreeGrafter"/>
</dbReference>
<dbReference type="GO" id="GO:0005384">
    <property type="term" value="F:manganese ion transmembrane transporter activity"/>
    <property type="evidence" value="ECO:0007669"/>
    <property type="project" value="TreeGrafter"/>
</dbReference>
<dbReference type="GO" id="GO:0046872">
    <property type="term" value="F:metal ion binding"/>
    <property type="evidence" value="ECO:0007669"/>
    <property type="project" value="UniProtKB-UniRule"/>
</dbReference>
<dbReference type="GO" id="GO:0015293">
    <property type="term" value="F:symporter activity"/>
    <property type="evidence" value="ECO:0007669"/>
    <property type="project" value="UniProtKB-UniRule"/>
</dbReference>
<dbReference type="GO" id="GO:0034755">
    <property type="term" value="P:iron ion transmembrane transport"/>
    <property type="evidence" value="ECO:0007669"/>
    <property type="project" value="TreeGrafter"/>
</dbReference>
<dbReference type="HAMAP" id="MF_00221">
    <property type="entry name" value="NRAMP"/>
    <property type="match status" value="1"/>
</dbReference>
<dbReference type="InterPro" id="IPR001046">
    <property type="entry name" value="NRAMP_fam"/>
</dbReference>
<dbReference type="NCBIfam" id="TIGR01197">
    <property type="entry name" value="nramp"/>
    <property type="match status" value="1"/>
</dbReference>
<dbReference type="NCBIfam" id="NF037982">
    <property type="entry name" value="Nramp_1"/>
    <property type="match status" value="1"/>
</dbReference>
<dbReference type="NCBIfam" id="NF001923">
    <property type="entry name" value="PRK00701.1"/>
    <property type="match status" value="1"/>
</dbReference>
<dbReference type="PANTHER" id="PTHR11706:SF33">
    <property type="entry name" value="NATURAL RESISTANCE-ASSOCIATED MACROPHAGE PROTEIN 2"/>
    <property type="match status" value="1"/>
</dbReference>
<dbReference type="PANTHER" id="PTHR11706">
    <property type="entry name" value="SOLUTE CARRIER PROTEIN FAMILY 11 MEMBER"/>
    <property type="match status" value="1"/>
</dbReference>
<dbReference type="Pfam" id="PF01566">
    <property type="entry name" value="Nramp"/>
    <property type="match status" value="1"/>
</dbReference>
<dbReference type="PRINTS" id="PR00447">
    <property type="entry name" value="NATRESASSCMP"/>
</dbReference>